<name>RL2_DICTD</name>
<comment type="function">
    <text evidence="1">One of the primary rRNA binding proteins. Required for association of the 30S and 50S subunits to form the 70S ribosome, for tRNA binding and peptide bond formation. It has been suggested to have peptidyltransferase activity; this is somewhat controversial. Makes several contacts with the 16S rRNA in the 70S ribosome.</text>
</comment>
<comment type="subunit">
    <text evidence="1">Part of the 50S ribosomal subunit. Forms a bridge to the 30S subunit in the 70S ribosome.</text>
</comment>
<comment type="similarity">
    <text evidence="1">Belongs to the universal ribosomal protein uL2 family.</text>
</comment>
<accession>B8E1D6</accession>
<protein>
    <recommendedName>
        <fullName evidence="1">Large ribosomal subunit protein uL2</fullName>
    </recommendedName>
    <alternativeName>
        <fullName evidence="3">50S ribosomal protein L2</fullName>
    </alternativeName>
</protein>
<dbReference type="EMBL" id="CP001251">
    <property type="protein sequence ID" value="ACK42264.1"/>
    <property type="molecule type" value="Genomic_DNA"/>
</dbReference>
<dbReference type="RefSeq" id="WP_012583348.1">
    <property type="nucleotide sequence ID" value="NC_011661.1"/>
</dbReference>
<dbReference type="RefSeq" id="YP_002352878.1">
    <property type="nucleotide sequence ID" value="NC_011661.1"/>
</dbReference>
<dbReference type="SMR" id="B8E1D6"/>
<dbReference type="FunCoup" id="B8E1D6">
    <property type="interactions" value="377"/>
</dbReference>
<dbReference type="STRING" id="515635.Dtur_0984"/>
<dbReference type="EnsemblBacteria" id="ACK42264">
    <property type="protein sequence ID" value="ACK42264"/>
    <property type="gene ID" value="Dtur_0984"/>
</dbReference>
<dbReference type="KEGG" id="dtu:Dtur_0984"/>
<dbReference type="PATRIC" id="fig|515635.4.peg.1021"/>
<dbReference type="eggNOG" id="COG0090">
    <property type="taxonomic scope" value="Bacteria"/>
</dbReference>
<dbReference type="HOGENOM" id="CLU_036235_2_1_0"/>
<dbReference type="InParanoid" id="B8E1D6"/>
<dbReference type="OrthoDB" id="9778722at2"/>
<dbReference type="Proteomes" id="UP000007719">
    <property type="component" value="Chromosome"/>
</dbReference>
<dbReference type="GO" id="GO:0015934">
    <property type="term" value="C:large ribosomal subunit"/>
    <property type="evidence" value="ECO:0007669"/>
    <property type="project" value="InterPro"/>
</dbReference>
<dbReference type="GO" id="GO:0003723">
    <property type="term" value="F:RNA binding"/>
    <property type="evidence" value="ECO:0000318"/>
    <property type="project" value="GO_Central"/>
</dbReference>
<dbReference type="GO" id="GO:0019843">
    <property type="term" value="F:rRNA binding"/>
    <property type="evidence" value="ECO:0007669"/>
    <property type="project" value="UniProtKB-UniRule"/>
</dbReference>
<dbReference type="GO" id="GO:0003735">
    <property type="term" value="F:structural constituent of ribosome"/>
    <property type="evidence" value="ECO:0000318"/>
    <property type="project" value="GO_Central"/>
</dbReference>
<dbReference type="GO" id="GO:0016740">
    <property type="term" value="F:transferase activity"/>
    <property type="evidence" value="ECO:0007669"/>
    <property type="project" value="InterPro"/>
</dbReference>
<dbReference type="GO" id="GO:0002181">
    <property type="term" value="P:cytoplasmic translation"/>
    <property type="evidence" value="ECO:0000318"/>
    <property type="project" value="GO_Central"/>
</dbReference>
<dbReference type="FunFam" id="2.30.30.30:FF:000001">
    <property type="entry name" value="50S ribosomal protein L2"/>
    <property type="match status" value="1"/>
</dbReference>
<dbReference type="FunFam" id="2.40.50.140:FF:000003">
    <property type="entry name" value="50S ribosomal protein L2"/>
    <property type="match status" value="1"/>
</dbReference>
<dbReference type="FunFam" id="4.10.950.10:FF:000001">
    <property type="entry name" value="50S ribosomal protein L2"/>
    <property type="match status" value="1"/>
</dbReference>
<dbReference type="Gene3D" id="2.30.30.30">
    <property type="match status" value="1"/>
</dbReference>
<dbReference type="Gene3D" id="2.40.50.140">
    <property type="entry name" value="Nucleic acid-binding proteins"/>
    <property type="match status" value="1"/>
</dbReference>
<dbReference type="Gene3D" id="4.10.950.10">
    <property type="entry name" value="Ribosomal protein L2, domain 3"/>
    <property type="match status" value="1"/>
</dbReference>
<dbReference type="HAMAP" id="MF_01320_B">
    <property type="entry name" value="Ribosomal_uL2_B"/>
    <property type="match status" value="1"/>
</dbReference>
<dbReference type="InterPro" id="IPR012340">
    <property type="entry name" value="NA-bd_OB-fold"/>
</dbReference>
<dbReference type="InterPro" id="IPR014722">
    <property type="entry name" value="Rib_uL2_dom2"/>
</dbReference>
<dbReference type="InterPro" id="IPR002171">
    <property type="entry name" value="Ribosomal_uL2"/>
</dbReference>
<dbReference type="InterPro" id="IPR005880">
    <property type="entry name" value="Ribosomal_uL2_bac/org-type"/>
</dbReference>
<dbReference type="InterPro" id="IPR022669">
    <property type="entry name" value="Ribosomal_uL2_C"/>
</dbReference>
<dbReference type="InterPro" id="IPR022671">
    <property type="entry name" value="Ribosomal_uL2_CS"/>
</dbReference>
<dbReference type="InterPro" id="IPR014726">
    <property type="entry name" value="Ribosomal_uL2_dom3"/>
</dbReference>
<dbReference type="InterPro" id="IPR022666">
    <property type="entry name" value="Ribosomal_uL2_RNA-bd_dom"/>
</dbReference>
<dbReference type="InterPro" id="IPR008991">
    <property type="entry name" value="Translation_prot_SH3-like_sf"/>
</dbReference>
<dbReference type="NCBIfam" id="TIGR01171">
    <property type="entry name" value="rplB_bact"/>
    <property type="match status" value="1"/>
</dbReference>
<dbReference type="PANTHER" id="PTHR13691:SF5">
    <property type="entry name" value="LARGE RIBOSOMAL SUBUNIT PROTEIN UL2M"/>
    <property type="match status" value="1"/>
</dbReference>
<dbReference type="PANTHER" id="PTHR13691">
    <property type="entry name" value="RIBOSOMAL PROTEIN L2"/>
    <property type="match status" value="1"/>
</dbReference>
<dbReference type="Pfam" id="PF00181">
    <property type="entry name" value="Ribosomal_L2"/>
    <property type="match status" value="1"/>
</dbReference>
<dbReference type="Pfam" id="PF03947">
    <property type="entry name" value="Ribosomal_L2_C"/>
    <property type="match status" value="1"/>
</dbReference>
<dbReference type="PIRSF" id="PIRSF002158">
    <property type="entry name" value="Ribosomal_L2"/>
    <property type="match status" value="1"/>
</dbReference>
<dbReference type="SMART" id="SM01383">
    <property type="entry name" value="Ribosomal_L2"/>
    <property type="match status" value="1"/>
</dbReference>
<dbReference type="SMART" id="SM01382">
    <property type="entry name" value="Ribosomal_L2_C"/>
    <property type="match status" value="1"/>
</dbReference>
<dbReference type="SUPFAM" id="SSF50249">
    <property type="entry name" value="Nucleic acid-binding proteins"/>
    <property type="match status" value="1"/>
</dbReference>
<dbReference type="SUPFAM" id="SSF50104">
    <property type="entry name" value="Translation proteins SH3-like domain"/>
    <property type="match status" value="1"/>
</dbReference>
<dbReference type="PROSITE" id="PS00467">
    <property type="entry name" value="RIBOSOMAL_L2"/>
    <property type="match status" value="1"/>
</dbReference>
<proteinExistence type="inferred from homology"/>
<gene>
    <name evidence="1" type="primary">rplB</name>
    <name type="ordered locus">Dtur_0984</name>
</gene>
<feature type="chain" id="PRO_1000141542" description="Large ribosomal subunit protein uL2">
    <location>
        <begin position="1"/>
        <end position="280"/>
    </location>
</feature>
<feature type="region of interest" description="Disordered" evidence="2">
    <location>
        <begin position="229"/>
        <end position="280"/>
    </location>
</feature>
<reference key="1">
    <citation type="journal article" date="2016" name="Front. Microbiol.">
        <title>The complete genome sequence of hyperthermophile Dictyoglomus turgidum DSM 6724 reveals a specialized carbohydrate fermentor.</title>
        <authorList>
            <person name="Brumm P.J."/>
            <person name="Gowda K."/>
            <person name="Robb F.T."/>
            <person name="Mead D.A."/>
        </authorList>
    </citation>
    <scope>NUCLEOTIDE SEQUENCE [LARGE SCALE GENOMIC DNA]</scope>
    <source>
        <strain>DSM 6724 / Z-1310</strain>
    </source>
</reference>
<evidence type="ECO:0000255" key="1">
    <source>
        <dbReference type="HAMAP-Rule" id="MF_01320"/>
    </source>
</evidence>
<evidence type="ECO:0000256" key="2">
    <source>
        <dbReference type="SAM" id="MobiDB-lite"/>
    </source>
</evidence>
<evidence type="ECO:0000305" key="3"/>
<sequence length="280" mass="31110">MGLKKFKPITPGLRHLILPDFSEITKEEPEKSLLRPLKKSGGRNNFGHVTTRFRGGGHKRLYRIIDFRRDKDNIPAKVASIEYDPNRTARIALLHYADGEKRYIIAPEGLKVGDIVMSGENVDIKVGNNLPLKNIPDGTLIHNLELYPGRGGQLVRAAGTAAQILGKEGKWAYVRLPSGEIRLFDLNCRATIGQVSNVDHQNVSLGKAGRSRWLGRRPHVRGSAMNAVDHPHGGGEGKAPIGHPSPLTPWGKPTLGYKTRKKRKPSDRFIIQRANDKKEK</sequence>
<organism>
    <name type="scientific">Dictyoglomus turgidum (strain DSM 6724 / Z-1310)</name>
    <dbReference type="NCBI Taxonomy" id="515635"/>
    <lineage>
        <taxon>Bacteria</taxon>
        <taxon>Pseudomonadati</taxon>
        <taxon>Dictyoglomota</taxon>
        <taxon>Dictyoglomia</taxon>
        <taxon>Dictyoglomales</taxon>
        <taxon>Dictyoglomaceae</taxon>
        <taxon>Dictyoglomus</taxon>
    </lineage>
</organism>
<keyword id="KW-1185">Reference proteome</keyword>
<keyword id="KW-0687">Ribonucleoprotein</keyword>
<keyword id="KW-0689">Ribosomal protein</keyword>
<keyword id="KW-0694">RNA-binding</keyword>
<keyword id="KW-0699">rRNA-binding</keyword>